<protein>
    <recommendedName>
        <fullName evidence="1">Protein translocase subunit SecA</fullName>
        <ecNumber evidence="1">7.4.2.8</ecNumber>
    </recommendedName>
</protein>
<proteinExistence type="inferred from homology"/>
<organism>
    <name type="scientific">Granulibacter bethesdensis (strain ATCC BAA-1260 / CGDNIH1)</name>
    <dbReference type="NCBI Taxonomy" id="391165"/>
    <lineage>
        <taxon>Bacteria</taxon>
        <taxon>Pseudomonadati</taxon>
        <taxon>Pseudomonadota</taxon>
        <taxon>Alphaproteobacteria</taxon>
        <taxon>Acetobacterales</taxon>
        <taxon>Acetobacteraceae</taxon>
        <taxon>Granulibacter</taxon>
    </lineage>
</organism>
<reference key="1">
    <citation type="journal article" date="2007" name="J. Bacteriol.">
        <title>Genome sequence analysis of the emerging human pathogenic acetic acid bacterium Granulibacter bethesdensis.</title>
        <authorList>
            <person name="Greenberg D.E."/>
            <person name="Porcella S.F."/>
            <person name="Zelazny A.M."/>
            <person name="Virtaneva K."/>
            <person name="Sturdevant D.E."/>
            <person name="Kupko J.J. III"/>
            <person name="Barbian K.D."/>
            <person name="Babar A."/>
            <person name="Dorward D.W."/>
            <person name="Holland S.M."/>
        </authorList>
    </citation>
    <scope>NUCLEOTIDE SEQUENCE [LARGE SCALE GENOMIC DNA]</scope>
    <source>
        <strain>ATCC BAA-1260 / CGDNIH1</strain>
    </source>
</reference>
<name>SECA_GRABC</name>
<accession>Q0BUI2</accession>
<feature type="chain" id="PRO_0000320822" description="Protein translocase subunit SecA">
    <location>
        <begin position="1"/>
        <end position="917"/>
    </location>
</feature>
<feature type="binding site" evidence="1">
    <location>
        <position position="87"/>
    </location>
    <ligand>
        <name>ATP</name>
        <dbReference type="ChEBI" id="CHEBI:30616"/>
    </ligand>
</feature>
<feature type="binding site" evidence="1">
    <location>
        <begin position="105"/>
        <end position="109"/>
    </location>
    <ligand>
        <name>ATP</name>
        <dbReference type="ChEBI" id="CHEBI:30616"/>
    </ligand>
</feature>
<feature type="binding site" evidence="1">
    <location>
        <position position="501"/>
    </location>
    <ligand>
        <name>ATP</name>
        <dbReference type="ChEBI" id="CHEBI:30616"/>
    </ligand>
</feature>
<feature type="binding site" evidence="1">
    <location>
        <position position="901"/>
    </location>
    <ligand>
        <name>Zn(2+)</name>
        <dbReference type="ChEBI" id="CHEBI:29105"/>
    </ligand>
</feature>
<feature type="binding site" evidence="1">
    <location>
        <position position="903"/>
    </location>
    <ligand>
        <name>Zn(2+)</name>
        <dbReference type="ChEBI" id="CHEBI:29105"/>
    </ligand>
</feature>
<feature type="binding site" evidence="1">
    <location>
        <position position="912"/>
    </location>
    <ligand>
        <name>Zn(2+)</name>
        <dbReference type="ChEBI" id="CHEBI:29105"/>
    </ligand>
</feature>
<feature type="binding site" evidence="1">
    <location>
        <position position="913"/>
    </location>
    <ligand>
        <name>Zn(2+)</name>
        <dbReference type="ChEBI" id="CHEBI:29105"/>
    </ligand>
</feature>
<sequence length="917" mass="102676">MFARLVRSIFGSSNDRSLRGYQRRVQQINALEPELAALTDAELQARTILLKQKLADGATLDGILPEAFAIVREASKRVFGMRHFDVQLIGGMVLHDGKIAEMRTGEGKTLVATLPVYLNALTGKGVHVVTVNDYLARRDAETMGQLYSFLGLSTGIVVHGQEELERRAAYHADITYGTNNEFGFDYLRDNMKYRLEDMVQRDFTYAIVDEVDSILIDEARTPLIISGPAEDSSNLYRSVDAVVRELVKDPAAFEKDEKQRSVHLTEAGSEKVEEMLHASGILTDGNLYDTFNITVLHHVQQSLRAHTLFERNVEYIVRDDKVIIIDEFTGRMMDGRRYSEGLHQALEAKEHVTVQQENQTLASITFQNYFRMYPKLAGMTGTALTEADEFAEIYKLDVLAVPTNLPVQRKDGDDEVYRTAREKYEAVANLIEEIRTRGQPVLVGTTSIEKSEVIKQLLDQKRIPAELLNAKQHEREAIIVAEAGAPGRVTIATNMAGRGTDIKLGGNAEARIQTELADMPEGPERDAAIARIEQEVQEAHEAVRKAGGLFVIGTERHESRRIDNQLRGRSGRQGDPGESRFFLSLEDDLMRIFGSDRMGAMLQRLGLKDGEAIIHPWINKALEKAQKKVEARNFDMRKNVLKYDDVMNDQRKEVYAQRREFMNADDVSETVADMREEVIDTLITRHIPERAFQEQWDTAGLAAGLRALLNADIPVEQWGREEGVDEAEMRRRVQAAATELMDVKAAHAGADAMRYIEKALLLQTLDQVWKEHLLLLDQLRQGIGLRAYGQRDPLNEYKSEAFSLFNAMLDELKQRVTAILAQVEFGAPPPASADPFVSGSSQFVESHPEPVSIRMAVGPNGEDIPLPPPPPAMFSAAYADVEGIDFNDPSTWINVPRNAPCPCGSGQKYKHCHGRLG</sequence>
<evidence type="ECO:0000255" key="1">
    <source>
        <dbReference type="HAMAP-Rule" id="MF_01382"/>
    </source>
</evidence>
<evidence type="ECO:0000305" key="2"/>
<gene>
    <name evidence="1" type="primary">secA</name>
    <name type="ordered locus">GbCGDNIH1_0622</name>
</gene>
<keyword id="KW-0067">ATP-binding</keyword>
<keyword id="KW-0997">Cell inner membrane</keyword>
<keyword id="KW-1003">Cell membrane</keyword>
<keyword id="KW-0963">Cytoplasm</keyword>
<keyword id="KW-0472">Membrane</keyword>
<keyword id="KW-0479">Metal-binding</keyword>
<keyword id="KW-0547">Nucleotide-binding</keyword>
<keyword id="KW-0653">Protein transport</keyword>
<keyword id="KW-1185">Reference proteome</keyword>
<keyword id="KW-1278">Translocase</keyword>
<keyword id="KW-0811">Translocation</keyword>
<keyword id="KW-0813">Transport</keyword>
<keyword id="KW-0862">Zinc</keyword>
<comment type="function">
    <text evidence="1">Part of the Sec protein translocase complex. Interacts with the SecYEG preprotein conducting channel. Has a central role in coupling the hydrolysis of ATP to the transfer of proteins into and across the cell membrane, serving both as a receptor for the preprotein-SecB complex and as an ATP-driven molecular motor driving the stepwise translocation of polypeptide chains across the membrane.</text>
</comment>
<comment type="catalytic activity">
    <reaction evidence="1">
        <text>ATP + H2O + cellular proteinSide 1 = ADP + phosphate + cellular proteinSide 2.</text>
        <dbReference type="EC" id="7.4.2.8"/>
    </reaction>
</comment>
<comment type="cofactor">
    <cofactor evidence="1">
        <name>Zn(2+)</name>
        <dbReference type="ChEBI" id="CHEBI:29105"/>
    </cofactor>
    <text evidence="1">May bind 1 zinc ion per subunit.</text>
</comment>
<comment type="subunit">
    <text evidence="1">Monomer and homodimer. Part of the essential Sec protein translocation apparatus which comprises SecA, SecYEG and auxiliary proteins SecDF-YajC and YidC.</text>
</comment>
<comment type="subcellular location">
    <subcellularLocation>
        <location evidence="1">Cell inner membrane</location>
        <topology evidence="1">Peripheral membrane protein</topology>
        <orientation evidence="1">Cytoplasmic side</orientation>
    </subcellularLocation>
    <subcellularLocation>
        <location evidence="1">Cytoplasm</location>
    </subcellularLocation>
    <text evidence="1">Distribution is 50-50.</text>
</comment>
<comment type="similarity">
    <text evidence="1">Belongs to the SecA family.</text>
</comment>
<comment type="sequence caution" evidence="2">
    <conflict type="erroneous initiation">
        <sequence resource="EMBL-CDS" id="ABI61520"/>
    </conflict>
    <text>Extended N-terminus.</text>
</comment>
<dbReference type="EC" id="7.4.2.8" evidence="1"/>
<dbReference type="EMBL" id="CP000394">
    <property type="protein sequence ID" value="ABI61520.1"/>
    <property type="status" value="ALT_INIT"/>
    <property type="molecule type" value="Genomic_DNA"/>
</dbReference>
<dbReference type="RefSeq" id="WP_011631329.1">
    <property type="nucleotide sequence ID" value="NC_008343.2"/>
</dbReference>
<dbReference type="SMR" id="Q0BUI2"/>
<dbReference type="STRING" id="391165.GbCGDNIH1_0622"/>
<dbReference type="KEGG" id="gbe:GbCGDNIH1_0622"/>
<dbReference type="eggNOG" id="COG0653">
    <property type="taxonomic scope" value="Bacteria"/>
</dbReference>
<dbReference type="HOGENOM" id="CLU_005314_3_0_5"/>
<dbReference type="OrthoDB" id="9805579at2"/>
<dbReference type="Proteomes" id="UP000001963">
    <property type="component" value="Chromosome"/>
</dbReference>
<dbReference type="GO" id="GO:0031522">
    <property type="term" value="C:cell envelope Sec protein transport complex"/>
    <property type="evidence" value="ECO:0007669"/>
    <property type="project" value="TreeGrafter"/>
</dbReference>
<dbReference type="GO" id="GO:0005829">
    <property type="term" value="C:cytosol"/>
    <property type="evidence" value="ECO:0007669"/>
    <property type="project" value="TreeGrafter"/>
</dbReference>
<dbReference type="GO" id="GO:0005886">
    <property type="term" value="C:plasma membrane"/>
    <property type="evidence" value="ECO:0007669"/>
    <property type="project" value="UniProtKB-SubCell"/>
</dbReference>
<dbReference type="GO" id="GO:0005524">
    <property type="term" value="F:ATP binding"/>
    <property type="evidence" value="ECO:0007669"/>
    <property type="project" value="UniProtKB-UniRule"/>
</dbReference>
<dbReference type="GO" id="GO:0046872">
    <property type="term" value="F:metal ion binding"/>
    <property type="evidence" value="ECO:0007669"/>
    <property type="project" value="UniProtKB-KW"/>
</dbReference>
<dbReference type="GO" id="GO:0008564">
    <property type="term" value="F:protein-exporting ATPase activity"/>
    <property type="evidence" value="ECO:0007669"/>
    <property type="project" value="UniProtKB-EC"/>
</dbReference>
<dbReference type="GO" id="GO:0065002">
    <property type="term" value="P:intracellular protein transmembrane transport"/>
    <property type="evidence" value="ECO:0007669"/>
    <property type="project" value="UniProtKB-UniRule"/>
</dbReference>
<dbReference type="GO" id="GO:0017038">
    <property type="term" value="P:protein import"/>
    <property type="evidence" value="ECO:0007669"/>
    <property type="project" value="InterPro"/>
</dbReference>
<dbReference type="GO" id="GO:0006605">
    <property type="term" value="P:protein targeting"/>
    <property type="evidence" value="ECO:0007669"/>
    <property type="project" value="UniProtKB-UniRule"/>
</dbReference>
<dbReference type="GO" id="GO:0043952">
    <property type="term" value="P:protein transport by the Sec complex"/>
    <property type="evidence" value="ECO:0007669"/>
    <property type="project" value="TreeGrafter"/>
</dbReference>
<dbReference type="CDD" id="cd17928">
    <property type="entry name" value="DEXDc_SecA"/>
    <property type="match status" value="1"/>
</dbReference>
<dbReference type="CDD" id="cd18803">
    <property type="entry name" value="SF2_C_secA"/>
    <property type="match status" value="1"/>
</dbReference>
<dbReference type="FunFam" id="3.40.50.300:FF:000113">
    <property type="entry name" value="Preprotein translocase subunit SecA"/>
    <property type="match status" value="1"/>
</dbReference>
<dbReference type="FunFam" id="3.90.1440.10:FF:000001">
    <property type="entry name" value="Preprotein translocase subunit SecA"/>
    <property type="match status" value="1"/>
</dbReference>
<dbReference type="FunFam" id="1.10.3060.10:FF:000003">
    <property type="entry name" value="Protein translocase subunit SecA"/>
    <property type="match status" value="1"/>
</dbReference>
<dbReference type="FunFam" id="3.40.50.300:FF:000334">
    <property type="entry name" value="Protein translocase subunit SecA"/>
    <property type="match status" value="1"/>
</dbReference>
<dbReference type="Gene3D" id="3.10.450.50">
    <property type="match status" value="1"/>
</dbReference>
<dbReference type="Gene3D" id="1.10.3060.10">
    <property type="entry name" value="Helical scaffold and wing domains of SecA"/>
    <property type="match status" value="1"/>
</dbReference>
<dbReference type="Gene3D" id="3.40.50.300">
    <property type="entry name" value="P-loop containing nucleotide triphosphate hydrolases"/>
    <property type="match status" value="2"/>
</dbReference>
<dbReference type="Gene3D" id="3.90.1440.10">
    <property type="entry name" value="SecA, preprotein cross-linking domain"/>
    <property type="match status" value="1"/>
</dbReference>
<dbReference type="HAMAP" id="MF_01382">
    <property type="entry name" value="SecA"/>
    <property type="match status" value="1"/>
</dbReference>
<dbReference type="InterPro" id="IPR014001">
    <property type="entry name" value="Helicase_ATP-bd"/>
</dbReference>
<dbReference type="InterPro" id="IPR001650">
    <property type="entry name" value="Helicase_C-like"/>
</dbReference>
<dbReference type="InterPro" id="IPR027417">
    <property type="entry name" value="P-loop_NTPase"/>
</dbReference>
<dbReference type="InterPro" id="IPR004027">
    <property type="entry name" value="SEC_C_motif"/>
</dbReference>
<dbReference type="InterPro" id="IPR000185">
    <property type="entry name" value="SecA"/>
</dbReference>
<dbReference type="InterPro" id="IPR020937">
    <property type="entry name" value="SecA_CS"/>
</dbReference>
<dbReference type="InterPro" id="IPR011115">
    <property type="entry name" value="SecA_DEAD"/>
</dbReference>
<dbReference type="InterPro" id="IPR014018">
    <property type="entry name" value="SecA_motor_DEAD"/>
</dbReference>
<dbReference type="InterPro" id="IPR011130">
    <property type="entry name" value="SecA_preprotein_X-link_dom"/>
</dbReference>
<dbReference type="InterPro" id="IPR044722">
    <property type="entry name" value="SecA_SF2_C"/>
</dbReference>
<dbReference type="InterPro" id="IPR011116">
    <property type="entry name" value="SecA_Wing/Scaffold"/>
</dbReference>
<dbReference type="InterPro" id="IPR036266">
    <property type="entry name" value="SecA_Wing/Scaffold_sf"/>
</dbReference>
<dbReference type="InterPro" id="IPR036670">
    <property type="entry name" value="SecA_X-link_sf"/>
</dbReference>
<dbReference type="NCBIfam" id="NF009538">
    <property type="entry name" value="PRK12904.1"/>
    <property type="match status" value="1"/>
</dbReference>
<dbReference type="NCBIfam" id="TIGR00963">
    <property type="entry name" value="secA"/>
    <property type="match status" value="1"/>
</dbReference>
<dbReference type="PANTHER" id="PTHR30612:SF0">
    <property type="entry name" value="CHLOROPLAST PROTEIN-TRANSPORTING ATPASE"/>
    <property type="match status" value="1"/>
</dbReference>
<dbReference type="PANTHER" id="PTHR30612">
    <property type="entry name" value="SECA INNER MEMBRANE COMPONENT OF SEC PROTEIN SECRETION SYSTEM"/>
    <property type="match status" value="1"/>
</dbReference>
<dbReference type="Pfam" id="PF21090">
    <property type="entry name" value="P-loop_SecA"/>
    <property type="match status" value="1"/>
</dbReference>
<dbReference type="Pfam" id="PF02810">
    <property type="entry name" value="SEC-C"/>
    <property type="match status" value="1"/>
</dbReference>
<dbReference type="Pfam" id="PF07517">
    <property type="entry name" value="SecA_DEAD"/>
    <property type="match status" value="1"/>
</dbReference>
<dbReference type="Pfam" id="PF01043">
    <property type="entry name" value="SecA_PP_bind"/>
    <property type="match status" value="1"/>
</dbReference>
<dbReference type="Pfam" id="PF07516">
    <property type="entry name" value="SecA_SW"/>
    <property type="match status" value="1"/>
</dbReference>
<dbReference type="PRINTS" id="PR00906">
    <property type="entry name" value="SECA"/>
</dbReference>
<dbReference type="SMART" id="SM00957">
    <property type="entry name" value="SecA_DEAD"/>
    <property type="match status" value="1"/>
</dbReference>
<dbReference type="SMART" id="SM00958">
    <property type="entry name" value="SecA_PP_bind"/>
    <property type="match status" value="1"/>
</dbReference>
<dbReference type="SUPFAM" id="SSF81886">
    <property type="entry name" value="Helical scaffold and wing domains of SecA"/>
    <property type="match status" value="1"/>
</dbReference>
<dbReference type="SUPFAM" id="SSF52540">
    <property type="entry name" value="P-loop containing nucleoside triphosphate hydrolases"/>
    <property type="match status" value="2"/>
</dbReference>
<dbReference type="SUPFAM" id="SSF81767">
    <property type="entry name" value="Pre-protein crosslinking domain of SecA"/>
    <property type="match status" value="1"/>
</dbReference>
<dbReference type="PROSITE" id="PS01312">
    <property type="entry name" value="SECA"/>
    <property type="match status" value="1"/>
</dbReference>
<dbReference type="PROSITE" id="PS51196">
    <property type="entry name" value="SECA_MOTOR_DEAD"/>
    <property type="match status" value="1"/>
</dbReference>